<comment type="function">
    <text evidence="3">Catalyzes the N-acylation of UDP-3-O-myristoylglucosamine using 3-hydroxyarachidoyl-ACP as the acyl donor. Is involved in the biosynthesis of lipid A, a phosphorylated glycolipid that anchors the lipopolysaccharide to the outer membrane of the cell (Probable).</text>
</comment>
<comment type="catalytic activity">
    <reaction>
        <text>a UDP-3-O-[(3R)-3-hydroxyacyl]-alpha-D-glucosamine + a (3R)-hydroxyacyl-[ACP] = a UDP-2-N,3-O-bis[(3R)-3-hydroxyacyl]-alpha-D-glucosamine + holo-[ACP] + H(+)</text>
        <dbReference type="Rhea" id="RHEA:53836"/>
        <dbReference type="Rhea" id="RHEA-COMP:9685"/>
        <dbReference type="Rhea" id="RHEA-COMP:9945"/>
        <dbReference type="ChEBI" id="CHEBI:15378"/>
        <dbReference type="ChEBI" id="CHEBI:64479"/>
        <dbReference type="ChEBI" id="CHEBI:78827"/>
        <dbReference type="ChEBI" id="CHEBI:137740"/>
        <dbReference type="ChEBI" id="CHEBI:137748"/>
        <dbReference type="EC" id="2.3.1.191"/>
    </reaction>
</comment>
<comment type="pathway">
    <text>Bacterial outer membrane biogenesis; LPS lipid A biosynthesis.</text>
</comment>
<comment type="subunit">
    <text evidence="1">Homotrimer.</text>
</comment>
<comment type="similarity">
    <text evidence="2">Belongs to the transferase hexapeptide repeat family. LpxD subfamily.</text>
</comment>
<accession>P0CD76</accession>
<accession>O84245</accession>
<accession>Q9S530</accession>
<dbReference type="EC" id="2.3.1.191"/>
<dbReference type="EMBL" id="AE001273">
    <property type="protein sequence ID" value="AAC67836.1"/>
    <property type="molecule type" value="Genomic_DNA"/>
</dbReference>
<dbReference type="PIR" id="D71539">
    <property type="entry name" value="D71539"/>
</dbReference>
<dbReference type="RefSeq" id="NP_219748.1">
    <property type="nucleotide sequence ID" value="NC_000117.1"/>
</dbReference>
<dbReference type="RefSeq" id="WP_009871590.1">
    <property type="nucleotide sequence ID" value="NC_000117.1"/>
</dbReference>
<dbReference type="PDB" id="2IU8">
    <property type="method" value="X-ray"/>
    <property type="resolution" value="2.20 A"/>
    <property type="chains" value="A/B/C=1-354"/>
</dbReference>
<dbReference type="PDB" id="2IU9">
    <property type="method" value="X-ray"/>
    <property type="resolution" value="3.10 A"/>
    <property type="chains" value="A/B/C=1-354"/>
</dbReference>
<dbReference type="PDB" id="2IUA">
    <property type="method" value="X-ray"/>
    <property type="resolution" value="2.70 A"/>
    <property type="chains" value="A/B/C=1-354"/>
</dbReference>
<dbReference type="PDBsum" id="2IU8"/>
<dbReference type="PDBsum" id="2IU9"/>
<dbReference type="PDBsum" id="2IUA"/>
<dbReference type="SMR" id="P0CD76"/>
<dbReference type="DIP" id="DIP-60889N"/>
<dbReference type="STRING" id="272561.CT_243"/>
<dbReference type="EnsemblBacteria" id="AAC67836">
    <property type="protein sequence ID" value="AAC67836"/>
    <property type="gene ID" value="CT_243"/>
</dbReference>
<dbReference type="GeneID" id="884880"/>
<dbReference type="KEGG" id="ctr:CT_243"/>
<dbReference type="PATRIC" id="fig|272561.5.peg.260"/>
<dbReference type="HOGENOM" id="CLU_049865_0_0_0"/>
<dbReference type="InParanoid" id="P0CD76"/>
<dbReference type="OrthoDB" id="9784739at2"/>
<dbReference type="BRENDA" id="2.3.1.191">
    <property type="organism ID" value="1315"/>
</dbReference>
<dbReference type="UniPathway" id="UPA00973"/>
<dbReference type="EvolutionaryTrace" id="P0CD76"/>
<dbReference type="Proteomes" id="UP000000431">
    <property type="component" value="Chromosome"/>
</dbReference>
<dbReference type="GO" id="GO:0016020">
    <property type="term" value="C:membrane"/>
    <property type="evidence" value="ECO:0007669"/>
    <property type="project" value="GOC"/>
</dbReference>
<dbReference type="GO" id="GO:0016410">
    <property type="term" value="F:N-acyltransferase activity"/>
    <property type="evidence" value="ECO:0007669"/>
    <property type="project" value="InterPro"/>
</dbReference>
<dbReference type="GO" id="GO:0009245">
    <property type="term" value="P:lipid A biosynthetic process"/>
    <property type="evidence" value="ECO:0007669"/>
    <property type="project" value="UniProtKB-UniRule"/>
</dbReference>
<dbReference type="CDD" id="cd03352">
    <property type="entry name" value="LbH_LpxD"/>
    <property type="match status" value="1"/>
</dbReference>
<dbReference type="Gene3D" id="1.20.5.170">
    <property type="match status" value="1"/>
</dbReference>
<dbReference type="Gene3D" id="2.160.10.10">
    <property type="entry name" value="Hexapeptide repeat proteins"/>
    <property type="match status" value="1"/>
</dbReference>
<dbReference type="Gene3D" id="3.40.1390.10">
    <property type="entry name" value="MurE/MurF, N-terminal domain"/>
    <property type="match status" value="1"/>
</dbReference>
<dbReference type="HAMAP" id="MF_00523">
    <property type="entry name" value="LpxD"/>
    <property type="match status" value="1"/>
</dbReference>
<dbReference type="InterPro" id="IPR001451">
    <property type="entry name" value="Hexapep"/>
</dbReference>
<dbReference type="InterPro" id="IPR007691">
    <property type="entry name" value="LpxD"/>
</dbReference>
<dbReference type="InterPro" id="IPR011004">
    <property type="entry name" value="Trimer_LpxA-like_sf"/>
</dbReference>
<dbReference type="InterPro" id="IPR020573">
    <property type="entry name" value="UDP_GlcNAc_AcTrfase_non-rep"/>
</dbReference>
<dbReference type="NCBIfam" id="TIGR01853">
    <property type="entry name" value="lipid_A_lpxD"/>
    <property type="match status" value="1"/>
</dbReference>
<dbReference type="NCBIfam" id="NF002060">
    <property type="entry name" value="PRK00892.1"/>
    <property type="match status" value="1"/>
</dbReference>
<dbReference type="PANTHER" id="PTHR43378">
    <property type="entry name" value="UDP-3-O-ACYLGLUCOSAMINE N-ACYLTRANSFERASE"/>
    <property type="match status" value="1"/>
</dbReference>
<dbReference type="PANTHER" id="PTHR43378:SF2">
    <property type="entry name" value="UDP-3-O-ACYLGLUCOSAMINE N-ACYLTRANSFERASE 1, MITOCHONDRIAL-RELATED"/>
    <property type="match status" value="1"/>
</dbReference>
<dbReference type="Pfam" id="PF00132">
    <property type="entry name" value="Hexapep"/>
    <property type="match status" value="2"/>
</dbReference>
<dbReference type="Pfam" id="PF04613">
    <property type="entry name" value="LpxD"/>
    <property type="match status" value="1"/>
</dbReference>
<dbReference type="SUPFAM" id="SSF51161">
    <property type="entry name" value="Trimeric LpxA-like enzymes"/>
    <property type="match status" value="1"/>
</dbReference>
<organism>
    <name type="scientific">Chlamydia trachomatis serovar D (strain ATCC VR-885 / DSM 19411 / UW-3/Cx)</name>
    <dbReference type="NCBI Taxonomy" id="272561"/>
    <lineage>
        <taxon>Bacteria</taxon>
        <taxon>Pseudomonadati</taxon>
        <taxon>Chlamydiota</taxon>
        <taxon>Chlamydiia</taxon>
        <taxon>Chlamydiales</taxon>
        <taxon>Chlamydiaceae</taxon>
        <taxon>Chlamydia/Chlamydophila group</taxon>
        <taxon>Chlamydia</taxon>
    </lineage>
</organism>
<protein>
    <recommendedName>
        <fullName>UDP-3-O-acylglucosamine N-acyltransferase</fullName>
        <ecNumber>2.3.1.191</ecNumber>
    </recommendedName>
</protein>
<gene>
    <name type="primary">lpxD</name>
    <name type="ordered locus">CT_243</name>
</gene>
<sequence>MSQSTYSLEQLADFLKVEFQGNGATLLSGVEEIEEAKTAHITFLDNEKYAKHLKSSEAGAIIISRTQFQKYRDLNKNFLITSESPSLVFQKCLELFITPVDSGFPGIHPTAVIHPTAIIEDHVCIEPYAVVCQHAHVGSACHIGSGSVIGAYSTVGEHSYIHPRVVIRERVSIGKRVIIQPGAVIGSCGFGYVTSAFGQHKHLKHLGKVIIEDDVEIGANTTIDRGRFKHSVVREGSKIDNLVQIAHQVEVGQHSMIVAQAGIAGSTKIGNHVIIGGQAGITGHICIADHVIMMAQTGVTKSITSPGIYGGAPARPYQEIHRQVAKVRNLPRLEERIAALEKLVQKLEALSEQH</sequence>
<keyword id="KW-0002">3D-structure</keyword>
<keyword id="KW-0012">Acyltransferase</keyword>
<keyword id="KW-0441">Lipid A biosynthesis</keyword>
<keyword id="KW-0444">Lipid biosynthesis</keyword>
<keyword id="KW-0443">Lipid metabolism</keyword>
<keyword id="KW-1185">Reference proteome</keyword>
<keyword id="KW-0677">Repeat</keyword>
<keyword id="KW-0808">Transferase</keyword>
<proteinExistence type="evidence at protein level"/>
<evidence type="ECO:0000269" key="1">
    <source>
    </source>
</evidence>
<evidence type="ECO:0000305" key="2"/>
<evidence type="ECO:0000305" key="3">
    <source>
    </source>
</evidence>
<evidence type="ECO:0000305" key="4">
    <source>
    </source>
</evidence>
<evidence type="ECO:0007829" key="5">
    <source>
        <dbReference type="PDB" id="2IU8"/>
    </source>
</evidence>
<evidence type="ECO:0007829" key="6">
    <source>
        <dbReference type="PDB" id="2IU9"/>
    </source>
</evidence>
<feature type="chain" id="PRO_0000059665" description="UDP-3-O-acylglucosamine N-acyltransferase">
    <location>
        <begin position="1"/>
        <end position="354"/>
    </location>
</feature>
<feature type="active site" description="Proton acceptor" evidence="4">
    <location>
        <position position="247"/>
    </location>
</feature>
<feature type="binding site">
    <location>
        <begin position="190"/>
        <end position="192"/>
    </location>
    <ligand>
        <name>UDP-N-acetyl-alpha-D-glucosamine</name>
        <dbReference type="ChEBI" id="CHEBI:57705"/>
    </ligand>
</feature>
<feature type="binding site" evidence="1">
    <location>
        <position position="240"/>
    </location>
    <ligand>
        <name>hexadecanoate</name>
        <dbReference type="ChEBI" id="CHEBI:7896"/>
    </ligand>
</feature>
<feature type="binding site" evidence="1">
    <location>
        <position position="244"/>
    </location>
    <ligand>
        <name>hexadecanoate</name>
        <dbReference type="ChEBI" id="CHEBI:7896"/>
    </ligand>
</feature>
<feature type="binding site" evidence="1">
    <location>
        <position position="248"/>
    </location>
    <ligand>
        <name>UDP-N-acetyl-alpha-D-glucosamine</name>
        <dbReference type="ChEBI" id="CHEBI:57705"/>
    </ligand>
</feature>
<feature type="binding site" evidence="1">
    <location>
        <position position="266"/>
    </location>
    <ligand>
        <name>UDP-N-acetyl-alpha-D-glucosamine</name>
        <dbReference type="ChEBI" id="CHEBI:57705"/>
    </ligand>
</feature>
<feature type="binding site" evidence="1">
    <location>
        <position position="284"/>
    </location>
    <ligand>
        <name>UDP-N-acetyl-alpha-D-glucosamine</name>
        <dbReference type="ChEBI" id="CHEBI:57705"/>
    </ligand>
</feature>
<feature type="site" description="Participates in a stacking interaction with the uracil ring of UDP-GlcNAc">
    <location>
        <position position="43"/>
    </location>
</feature>
<feature type="site" description="Participates in a stacking interaction with the uracil ring of UDP-GlcNAc">
    <location>
        <position position="49"/>
    </location>
</feature>
<feature type="helix" evidence="5">
    <location>
        <begin position="8"/>
        <end position="14"/>
    </location>
</feature>
<feature type="strand" evidence="5">
    <location>
        <begin position="18"/>
        <end position="21"/>
    </location>
</feature>
<feature type="turn" evidence="5">
    <location>
        <begin position="33"/>
        <end position="35"/>
    </location>
</feature>
<feature type="strand" evidence="5">
    <location>
        <begin position="40"/>
        <end position="43"/>
    </location>
</feature>
<feature type="strand" evidence="5">
    <location>
        <begin position="46"/>
        <end position="48"/>
    </location>
</feature>
<feature type="helix" evidence="5">
    <location>
        <begin position="50"/>
        <end position="54"/>
    </location>
</feature>
<feature type="strand" evidence="5">
    <location>
        <begin position="59"/>
        <end position="64"/>
    </location>
</feature>
<feature type="helix" evidence="5">
    <location>
        <begin position="65"/>
        <end position="69"/>
    </location>
</feature>
<feature type="strand" evidence="5">
    <location>
        <begin position="78"/>
        <end position="83"/>
    </location>
</feature>
<feature type="helix" evidence="5">
    <location>
        <begin position="85"/>
        <end position="93"/>
    </location>
</feature>
<feature type="turn" evidence="5">
    <location>
        <begin position="94"/>
        <end position="96"/>
    </location>
</feature>
<feature type="strand" evidence="6">
    <location>
        <begin position="117"/>
        <end position="119"/>
    </location>
</feature>
<feature type="strand" evidence="5">
    <location>
        <begin position="169"/>
        <end position="173"/>
    </location>
</feature>
<feature type="strand" evidence="5">
    <location>
        <begin position="184"/>
        <end position="188"/>
    </location>
</feature>
<feature type="strand" evidence="5">
    <location>
        <begin position="192"/>
        <end position="195"/>
    </location>
</feature>
<feature type="turn" evidence="5">
    <location>
        <begin position="196"/>
        <end position="198"/>
    </location>
</feature>
<feature type="strand" evidence="5">
    <location>
        <begin position="199"/>
        <end position="202"/>
    </location>
</feature>
<feature type="strand" evidence="5">
    <location>
        <begin position="209"/>
        <end position="211"/>
    </location>
</feature>
<feature type="strand" evidence="5">
    <location>
        <begin position="222"/>
        <end position="225"/>
    </location>
</feature>
<feature type="strand" evidence="5">
    <location>
        <begin position="227"/>
        <end position="229"/>
    </location>
</feature>
<feature type="strand" evidence="5">
    <location>
        <begin position="231"/>
        <end position="233"/>
    </location>
</feature>
<feature type="strand" evidence="5">
    <location>
        <begin position="291"/>
        <end position="293"/>
    </location>
</feature>
<feature type="strand" evidence="5">
    <location>
        <begin position="307"/>
        <end position="310"/>
    </location>
</feature>
<feature type="turn" evidence="5">
    <location>
        <begin position="311"/>
        <end position="314"/>
    </location>
</feature>
<feature type="helix" evidence="5">
    <location>
        <begin position="317"/>
        <end position="328"/>
    </location>
</feature>
<feature type="helix" evidence="5">
    <location>
        <begin position="330"/>
        <end position="342"/>
    </location>
</feature>
<reference key="1">
    <citation type="journal article" date="1998" name="Science">
        <title>Genome sequence of an obligate intracellular pathogen of humans: Chlamydia trachomatis.</title>
        <authorList>
            <person name="Stephens R.S."/>
            <person name="Kalman S."/>
            <person name="Lammel C.J."/>
            <person name="Fan J."/>
            <person name="Marathe R."/>
            <person name="Aravind L."/>
            <person name="Mitchell W.P."/>
            <person name="Olinger L."/>
            <person name="Tatusov R.L."/>
            <person name="Zhao Q."/>
            <person name="Koonin E.V."/>
            <person name="Davis R.W."/>
        </authorList>
    </citation>
    <scope>NUCLEOTIDE SEQUENCE [LARGE SCALE GENOMIC DNA]</scope>
    <source>
        <strain>ATCC VR-885 / DSM 19411 / UW-3/Cx</strain>
    </source>
</reference>
<reference key="2">
    <citation type="journal article" date="1999" name="J. Biol. Chem.">
        <title>Structural analysis of the lipopolysaccharide from Chlamydia trachomatis serotype L2.</title>
        <authorList>
            <person name="Rund S."/>
            <person name="Lindner B."/>
            <person name="Brade H."/>
            <person name="Holst O."/>
        </authorList>
    </citation>
    <scope>IDENTIFICATION OF 3-HYDROXYARACHIDOYL-ACP AS PREDICTED SUBSTRATE</scope>
    <scope>FUNCTION</scope>
    <source>
        <strain>L2</strain>
    </source>
</reference>
<reference key="3">
    <citation type="journal article" date="2007" name="Proc. Natl. Acad. Sci. U.S.A.">
        <title>Structure and reactivity of LpxD, the N-acyltransferase of lipid A biosynthesis.</title>
        <authorList>
            <person name="Buetow L."/>
            <person name="Smith T.K."/>
            <person name="Dawson A."/>
            <person name="Fyffe S."/>
            <person name="Hunter W.N."/>
        </authorList>
    </citation>
    <scope>X-RAY CRYSTALLOGRAPHY (2.2 ANGSTROMS) IN COMPLEX WITH UDP-GLCNAC AND PALMITATE</scope>
    <scope>ACTIVE SITE</scope>
    <scope>SUBUNIT</scope>
    <source>
        <strain>B</strain>
    </source>
</reference>
<name>LPXD_CHLTR</name>